<organism>
    <name type="scientific">Escherichia coli O6:K15:H31 (strain 536 / UPEC)</name>
    <dbReference type="NCBI Taxonomy" id="362663"/>
    <lineage>
        <taxon>Bacteria</taxon>
        <taxon>Pseudomonadati</taxon>
        <taxon>Pseudomonadota</taxon>
        <taxon>Gammaproteobacteria</taxon>
        <taxon>Enterobacterales</taxon>
        <taxon>Enterobacteriaceae</taxon>
        <taxon>Escherichia</taxon>
    </lineage>
</organism>
<feature type="chain" id="PRO_1000012431" description="3-phosphoshikimate 1-carboxyvinyltransferase">
    <location>
        <begin position="1"/>
        <end position="427"/>
    </location>
</feature>
<feature type="active site" description="Proton acceptor" evidence="1">
    <location>
        <position position="313"/>
    </location>
</feature>
<feature type="binding site" evidence="1">
    <location>
        <position position="22"/>
    </location>
    <ligand>
        <name>3-phosphoshikimate</name>
        <dbReference type="ChEBI" id="CHEBI:145989"/>
    </ligand>
</feature>
<feature type="binding site" evidence="1">
    <location>
        <position position="22"/>
    </location>
    <ligand>
        <name>phosphoenolpyruvate</name>
        <dbReference type="ChEBI" id="CHEBI:58702"/>
    </ligand>
</feature>
<feature type="binding site" evidence="1">
    <location>
        <position position="23"/>
    </location>
    <ligand>
        <name>3-phosphoshikimate</name>
        <dbReference type="ChEBI" id="CHEBI:145989"/>
    </ligand>
</feature>
<feature type="binding site" evidence="1">
    <location>
        <position position="27"/>
    </location>
    <ligand>
        <name>3-phosphoshikimate</name>
        <dbReference type="ChEBI" id="CHEBI:145989"/>
    </ligand>
</feature>
<feature type="binding site" evidence="1">
    <location>
        <position position="96"/>
    </location>
    <ligand>
        <name>phosphoenolpyruvate</name>
        <dbReference type="ChEBI" id="CHEBI:58702"/>
    </ligand>
</feature>
<feature type="binding site" evidence="1">
    <location>
        <position position="124"/>
    </location>
    <ligand>
        <name>phosphoenolpyruvate</name>
        <dbReference type="ChEBI" id="CHEBI:58702"/>
    </ligand>
</feature>
<feature type="binding site" evidence="1">
    <location>
        <position position="169"/>
    </location>
    <ligand>
        <name>3-phosphoshikimate</name>
        <dbReference type="ChEBI" id="CHEBI:145989"/>
    </ligand>
</feature>
<feature type="binding site" evidence="1">
    <location>
        <position position="170"/>
    </location>
    <ligand>
        <name>3-phosphoshikimate</name>
        <dbReference type="ChEBI" id="CHEBI:145989"/>
    </ligand>
</feature>
<feature type="binding site" evidence="1">
    <location>
        <position position="171"/>
    </location>
    <ligand>
        <name>3-phosphoshikimate</name>
        <dbReference type="ChEBI" id="CHEBI:145989"/>
    </ligand>
</feature>
<feature type="binding site" evidence="1">
    <location>
        <position position="171"/>
    </location>
    <ligand>
        <name>phosphoenolpyruvate</name>
        <dbReference type="ChEBI" id="CHEBI:58702"/>
    </ligand>
</feature>
<feature type="binding site" evidence="1">
    <location>
        <position position="197"/>
    </location>
    <ligand>
        <name>3-phosphoshikimate</name>
        <dbReference type="ChEBI" id="CHEBI:145989"/>
    </ligand>
</feature>
<feature type="binding site" evidence="1">
    <location>
        <position position="313"/>
    </location>
    <ligand>
        <name>3-phosphoshikimate</name>
        <dbReference type="ChEBI" id="CHEBI:145989"/>
    </ligand>
</feature>
<feature type="binding site" evidence="1">
    <location>
        <position position="336"/>
    </location>
    <ligand>
        <name>3-phosphoshikimate</name>
        <dbReference type="ChEBI" id="CHEBI:145989"/>
    </ligand>
</feature>
<feature type="binding site" evidence="1">
    <location>
        <position position="340"/>
    </location>
    <ligand>
        <name>3-phosphoshikimate</name>
        <dbReference type="ChEBI" id="CHEBI:145989"/>
    </ligand>
</feature>
<feature type="binding site" evidence="1">
    <location>
        <position position="344"/>
    </location>
    <ligand>
        <name>phosphoenolpyruvate</name>
        <dbReference type="ChEBI" id="CHEBI:58702"/>
    </ligand>
</feature>
<feature type="binding site" evidence="1">
    <location>
        <position position="386"/>
    </location>
    <ligand>
        <name>phosphoenolpyruvate</name>
        <dbReference type="ChEBI" id="CHEBI:58702"/>
    </ligand>
</feature>
<feature type="binding site" evidence="1">
    <location>
        <position position="411"/>
    </location>
    <ligand>
        <name>phosphoenolpyruvate</name>
        <dbReference type="ChEBI" id="CHEBI:58702"/>
    </ligand>
</feature>
<name>AROA_ECOL5</name>
<evidence type="ECO:0000255" key="1">
    <source>
        <dbReference type="HAMAP-Rule" id="MF_00210"/>
    </source>
</evidence>
<accession>Q0TJE5</accession>
<comment type="function">
    <text evidence="1">Catalyzes the transfer of the enolpyruvyl moiety of phosphoenolpyruvate (PEP) to the 5-hydroxyl of shikimate-3-phosphate (S3P) to produce enolpyruvyl shikimate-3-phosphate and inorganic phosphate.</text>
</comment>
<comment type="catalytic activity">
    <reaction evidence="1">
        <text>3-phosphoshikimate + phosphoenolpyruvate = 5-O-(1-carboxyvinyl)-3-phosphoshikimate + phosphate</text>
        <dbReference type="Rhea" id="RHEA:21256"/>
        <dbReference type="ChEBI" id="CHEBI:43474"/>
        <dbReference type="ChEBI" id="CHEBI:57701"/>
        <dbReference type="ChEBI" id="CHEBI:58702"/>
        <dbReference type="ChEBI" id="CHEBI:145989"/>
        <dbReference type="EC" id="2.5.1.19"/>
    </reaction>
    <physiologicalReaction direction="left-to-right" evidence="1">
        <dbReference type="Rhea" id="RHEA:21257"/>
    </physiologicalReaction>
</comment>
<comment type="pathway">
    <text evidence="1">Metabolic intermediate biosynthesis; chorismate biosynthesis; chorismate from D-erythrose 4-phosphate and phosphoenolpyruvate: step 6/7.</text>
</comment>
<comment type="subunit">
    <text evidence="1">Monomer.</text>
</comment>
<comment type="subcellular location">
    <subcellularLocation>
        <location evidence="1">Cytoplasm</location>
    </subcellularLocation>
</comment>
<comment type="similarity">
    <text evidence="1">Belongs to the EPSP synthase family.</text>
</comment>
<sequence length="427" mass="46222">MESLTLQPIARVDGTINLPGSKSVSNRALLLAALAHGKTVLTNLLDSDDVRHMLNALTALGVSYTLSADRTRCEIIGNGGPLHAESARELFLGNAGTAMRPLAAALCLGSNDIVLTGEPRMKERPIGHLVDALRQGGAKITYLEQENYPPLRLQGGFTGGNVDVDGSVSSQFLTALLMTAPLAPEDTVIRIKGDLVSKPYIDITLNLMKTFGVEIENQHYQQFVVKGGQSYQSPGTYLVEGDASSASYFLAAAAIRGGTVKVTGIGRNSMQGDIRFADVLEKMGATICWGDDYISCTRGELNAIDMDMNHIPDAAMTIATAALFAKGTTTLRNIYNWRVKETDRLFAMATELRKVGAEVEEGHDFIRITPPEKLKFAEIATYNDHRMAMCFSLVALSDTPVTILDPKCTAKTFPDYFEQLARISQPG</sequence>
<keyword id="KW-0028">Amino-acid biosynthesis</keyword>
<keyword id="KW-0057">Aromatic amino acid biosynthesis</keyword>
<keyword id="KW-0963">Cytoplasm</keyword>
<keyword id="KW-0808">Transferase</keyword>
<reference key="1">
    <citation type="journal article" date="2006" name="Mol. Microbiol.">
        <title>Role of pathogenicity island-associated integrases in the genome plasticity of uropathogenic Escherichia coli strain 536.</title>
        <authorList>
            <person name="Hochhut B."/>
            <person name="Wilde C."/>
            <person name="Balling G."/>
            <person name="Middendorf B."/>
            <person name="Dobrindt U."/>
            <person name="Brzuszkiewicz E."/>
            <person name="Gottschalk G."/>
            <person name="Carniel E."/>
            <person name="Hacker J."/>
        </authorList>
    </citation>
    <scope>NUCLEOTIDE SEQUENCE [LARGE SCALE GENOMIC DNA]</scope>
    <source>
        <strain>536 / UPEC</strain>
    </source>
</reference>
<protein>
    <recommendedName>
        <fullName evidence="1">3-phosphoshikimate 1-carboxyvinyltransferase</fullName>
        <ecNumber evidence="1">2.5.1.19</ecNumber>
    </recommendedName>
    <alternativeName>
        <fullName evidence="1">5-enolpyruvylshikimate-3-phosphate synthase</fullName>
        <shortName evidence="1">EPSP synthase</shortName>
        <shortName evidence="1">EPSPS</shortName>
    </alternativeName>
</protein>
<gene>
    <name evidence="1" type="primary">aroA</name>
    <name type="ordered locus">ECP_0919</name>
</gene>
<dbReference type="EC" id="2.5.1.19" evidence="1"/>
<dbReference type="EMBL" id="CP000247">
    <property type="protein sequence ID" value="ABG68934.1"/>
    <property type="molecule type" value="Genomic_DNA"/>
</dbReference>
<dbReference type="RefSeq" id="WP_000445244.1">
    <property type="nucleotide sequence ID" value="NC_008253.1"/>
</dbReference>
<dbReference type="SMR" id="Q0TJE5"/>
<dbReference type="KEGG" id="ecp:ECP_0919"/>
<dbReference type="HOGENOM" id="CLU_024321_0_0_6"/>
<dbReference type="UniPathway" id="UPA00053">
    <property type="reaction ID" value="UER00089"/>
</dbReference>
<dbReference type="Proteomes" id="UP000009182">
    <property type="component" value="Chromosome"/>
</dbReference>
<dbReference type="GO" id="GO:0005737">
    <property type="term" value="C:cytoplasm"/>
    <property type="evidence" value="ECO:0007669"/>
    <property type="project" value="UniProtKB-SubCell"/>
</dbReference>
<dbReference type="GO" id="GO:0003866">
    <property type="term" value="F:3-phosphoshikimate 1-carboxyvinyltransferase activity"/>
    <property type="evidence" value="ECO:0007669"/>
    <property type="project" value="UniProtKB-UniRule"/>
</dbReference>
<dbReference type="GO" id="GO:0008652">
    <property type="term" value="P:amino acid biosynthetic process"/>
    <property type="evidence" value="ECO:0007669"/>
    <property type="project" value="UniProtKB-KW"/>
</dbReference>
<dbReference type="GO" id="GO:0009073">
    <property type="term" value="P:aromatic amino acid family biosynthetic process"/>
    <property type="evidence" value="ECO:0007669"/>
    <property type="project" value="UniProtKB-KW"/>
</dbReference>
<dbReference type="GO" id="GO:0009423">
    <property type="term" value="P:chorismate biosynthetic process"/>
    <property type="evidence" value="ECO:0007669"/>
    <property type="project" value="UniProtKB-UniRule"/>
</dbReference>
<dbReference type="CDD" id="cd01554">
    <property type="entry name" value="EPT-like"/>
    <property type="match status" value="1"/>
</dbReference>
<dbReference type="FunFam" id="3.65.10.10:FF:000003">
    <property type="entry name" value="3-phosphoshikimate 1-carboxyvinyltransferase"/>
    <property type="match status" value="1"/>
</dbReference>
<dbReference type="FunFam" id="3.65.10.10:FF:000004">
    <property type="entry name" value="3-phosphoshikimate 1-carboxyvinyltransferase"/>
    <property type="match status" value="1"/>
</dbReference>
<dbReference type="Gene3D" id="3.65.10.10">
    <property type="entry name" value="Enolpyruvate transferase domain"/>
    <property type="match status" value="2"/>
</dbReference>
<dbReference type="HAMAP" id="MF_00210">
    <property type="entry name" value="EPSP_synth"/>
    <property type="match status" value="1"/>
</dbReference>
<dbReference type="InterPro" id="IPR001986">
    <property type="entry name" value="Enolpyruvate_Tfrase_dom"/>
</dbReference>
<dbReference type="InterPro" id="IPR036968">
    <property type="entry name" value="Enolpyruvate_Tfrase_sf"/>
</dbReference>
<dbReference type="InterPro" id="IPR006264">
    <property type="entry name" value="EPSP_synthase"/>
</dbReference>
<dbReference type="InterPro" id="IPR023193">
    <property type="entry name" value="EPSP_synthase_CS"/>
</dbReference>
<dbReference type="InterPro" id="IPR013792">
    <property type="entry name" value="RNA3'P_cycl/enolpyr_Trfase_a/b"/>
</dbReference>
<dbReference type="NCBIfam" id="TIGR01356">
    <property type="entry name" value="aroA"/>
    <property type="match status" value="1"/>
</dbReference>
<dbReference type="PANTHER" id="PTHR21090">
    <property type="entry name" value="AROM/DEHYDROQUINATE SYNTHASE"/>
    <property type="match status" value="1"/>
</dbReference>
<dbReference type="PANTHER" id="PTHR21090:SF5">
    <property type="entry name" value="PENTAFUNCTIONAL AROM POLYPEPTIDE"/>
    <property type="match status" value="1"/>
</dbReference>
<dbReference type="Pfam" id="PF00275">
    <property type="entry name" value="EPSP_synthase"/>
    <property type="match status" value="1"/>
</dbReference>
<dbReference type="PIRSF" id="PIRSF000505">
    <property type="entry name" value="EPSPS"/>
    <property type="match status" value="1"/>
</dbReference>
<dbReference type="SUPFAM" id="SSF55205">
    <property type="entry name" value="EPT/RTPC-like"/>
    <property type="match status" value="1"/>
</dbReference>
<dbReference type="PROSITE" id="PS00104">
    <property type="entry name" value="EPSP_SYNTHASE_1"/>
    <property type="match status" value="1"/>
</dbReference>
<dbReference type="PROSITE" id="PS00885">
    <property type="entry name" value="EPSP_SYNTHASE_2"/>
    <property type="match status" value="1"/>
</dbReference>
<proteinExistence type="inferred from homology"/>